<gene>
    <name evidence="1" type="primary">glyA</name>
    <name type="ordered locus">Gura_1881</name>
</gene>
<name>GLYA_GEOUR</name>
<accession>A5GF66</accession>
<protein>
    <recommendedName>
        <fullName evidence="1">Serine hydroxymethyltransferase</fullName>
        <shortName evidence="1">SHMT</shortName>
        <shortName evidence="1">Serine methylase</shortName>
        <ecNumber evidence="1">2.1.2.1</ecNumber>
    </recommendedName>
</protein>
<proteinExistence type="inferred from homology"/>
<comment type="function">
    <text evidence="1">Catalyzes the reversible interconversion of serine and glycine with tetrahydrofolate (THF) serving as the one-carbon carrier. This reaction serves as the major source of one-carbon groups required for the biosynthesis of purines, thymidylate, methionine, and other important biomolecules. Also exhibits THF-independent aldolase activity toward beta-hydroxyamino acids, producing glycine and aldehydes, via a retro-aldol mechanism.</text>
</comment>
<comment type="catalytic activity">
    <reaction evidence="1">
        <text>(6R)-5,10-methylene-5,6,7,8-tetrahydrofolate + glycine + H2O = (6S)-5,6,7,8-tetrahydrofolate + L-serine</text>
        <dbReference type="Rhea" id="RHEA:15481"/>
        <dbReference type="ChEBI" id="CHEBI:15377"/>
        <dbReference type="ChEBI" id="CHEBI:15636"/>
        <dbReference type="ChEBI" id="CHEBI:33384"/>
        <dbReference type="ChEBI" id="CHEBI:57305"/>
        <dbReference type="ChEBI" id="CHEBI:57453"/>
        <dbReference type="EC" id="2.1.2.1"/>
    </reaction>
</comment>
<comment type="cofactor">
    <cofactor evidence="1">
        <name>pyridoxal 5'-phosphate</name>
        <dbReference type="ChEBI" id="CHEBI:597326"/>
    </cofactor>
</comment>
<comment type="pathway">
    <text evidence="1">One-carbon metabolism; tetrahydrofolate interconversion.</text>
</comment>
<comment type="pathway">
    <text evidence="1">Amino-acid biosynthesis; glycine biosynthesis; glycine from L-serine: step 1/1.</text>
</comment>
<comment type="subunit">
    <text evidence="1">Homodimer.</text>
</comment>
<comment type="subcellular location">
    <subcellularLocation>
        <location evidence="1">Cytoplasm</location>
    </subcellularLocation>
</comment>
<comment type="similarity">
    <text evidence="1">Belongs to the SHMT family.</text>
</comment>
<reference key="1">
    <citation type="submission" date="2007-05" db="EMBL/GenBank/DDBJ databases">
        <title>Complete sequence of Geobacter uraniireducens Rf4.</title>
        <authorList>
            <consortium name="US DOE Joint Genome Institute"/>
            <person name="Copeland A."/>
            <person name="Lucas S."/>
            <person name="Lapidus A."/>
            <person name="Barry K."/>
            <person name="Detter J.C."/>
            <person name="Glavina del Rio T."/>
            <person name="Hammon N."/>
            <person name="Israni S."/>
            <person name="Dalin E."/>
            <person name="Tice H."/>
            <person name="Pitluck S."/>
            <person name="Chertkov O."/>
            <person name="Brettin T."/>
            <person name="Bruce D."/>
            <person name="Han C."/>
            <person name="Schmutz J."/>
            <person name="Larimer F."/>
            <person name="Land M."/>
            <person name="Hauser L."/>
            <person name="Kyrpides N."/>
            <person name="Mikhailova N."/>
            <person name="Shelobolina E."/>
            <person name="Aklujkar M."/>
            <person name="Lovley D."/>
            <person name="Richardson P."/>
        </authorList>
    </citation>
    <scope>NUCLEOTIDE SEQUENCE [LARGE SCALE GENOMIC DNA]</scope>
    <source>
        <strain>ATCC BAA-1134 / JCM 13001 / Rf4</strain>
    </source>
</reference>
<organism>
    <name type="scientific">Geotalea uraniireducens (strain Rf4)</name>
    <name type="common">Geobacter uraniireducens</name>
    <dbReference type="NCBI Taxonomy" id="351605"/>
    <lineage>
        <taxon>Bacteria</taxon>
        <taxon>Pseudomonadati</taxon>
        <taxon>Thermodesulfobacteriota</taxon>
        <taxon>Desulfuromonadia</taxon>
        <taxon>Geobacterales</taxon>
        <taxon>Geobacteraceae</taxon>
        <taxon>Geotalea</taxon>
    </lineage>
</organism>
<sequence>MSILETFDPAVANAIRLETERQEYNLELIASENFVSEAVMEAQGSVLTNKYAEGYPGKRYYGGCHNVDIVENLAIERAKELFGAEHANVQPHSGSQANMAVYFTVLKPGDTVLGMNLAHGGHLTHGSPVNFSGKFFNIVPYGVTRENQTIDYDEVERLTLEHKPKMIVVGASAYPRIIDFAAFRKVADKVGAVVMVDMAHIAGLVAAGLHPSPVPHAEFVTTTTHKTLRGPRGGMILCREEFAKALNSNIFPGIQGGPLMHAIAAKAVAFKEALAPEFKTYQEQIVKNAKALAAGLVKQGFKLTSGGTDNHLMLVDLSETQLTGKVAEEALDKAGITVNKNGIPFDTRSPFITSGIRIGTPAATTHGLKEANMEEVAVLIADALANVENETKLAEVKGRVNAMMKRFPLYAHRLA</sequence>
<feature type="chain" id="PRO_1000074898" description="Serine hydroxymethyltransferase">
    <location>
        <begin position="1"/>
        <end position="415"/>
    </location>
</feature>
<feature type="binding site" evidence="1">
    <location>
        <position position="117"/>
    </location>
    <ligand>
        <name>(6S)-5,6,7,8-tetrahydrofolate</name>
        <dbReference type="ChEBI" id="CHEBI:57453"/>
    </ligand>
</feature>
<feature type="binding site" evidence="1">
    <location>
        <begin position="121"/>
        <end position="123"/>
    </location>
    <ligand>
        <name>(6S)-5,6,7,8-tetrahydrofolate</name>
        <dbReference type="ChEBI" id="CHEBI:57453"/>
    </ligand>
</feature>
<feature type="binding site" evidence="1">
    <location>
        <position position="241"/>
    </location>
    <ligand>
        <name>(6S)-5,6,7,8-tetrahydrofolate</name>
        <dbReference type="ChEBI" id="CHEBI:57453"/>
    </ligand>
</feature>
<feature type="binding site" evidence="1">
    <location>
        <begin position="349"/>
        <end position="351"/>
    </location>
    <ligand>
        <name>(6S)-5,6,7,8-tetrahydrofolate</name>
        <dbReference type="ChEBI" id="CHEBI:57453"/>
    </ligand>
</feature>
<feature type="site" description="Plays an important role in substrate specificity" evidence="1">
    <location>
        <position position="225"/>
    </location>
</feature>
<feature type="modified residue" description="N6-(pyridoxal phosphate)lysine" evidence="1">
    <location>
        <position position="226"/>
    </location>
</feature>
<keyword id="KW-0028">Amino-acid biosynthesis</keyword>
<keyword id="KW-0963">Cytoplasm</keyword>
<keyword id="KW-0554">One-carbon metabolism</keyword>
<keyword id="KW-0663">Pyridoxal phosphate</keyword>
<keyword id="KW-1185">Reference proteome</keyword>
<keyword id="KW-0808">Transferase</keyword>
<dbReference type="EC" id="2.1.2.1" evidence="1"/>
<dbReference type="EMBL" id="CP000698">
    <property type="protein sequence ID" value="ABQ26071.1"/>
    <property type="molecule type" value="Genomic_DNA"/>
</dbReference>
<dbReference type="RefSeq" id="WP_011938774.1">
    <property type="nucleotide sequence ID" value="NC_009483.1"/>
</dbReference>
<dbReference type="SMR" id="A5GF66"/>
<dbReference type="STRING" id="351605.Gura_1881"/>
<dbReference type="KEGG" id="gur:Gura_1881"/>
<dbReference type="HOGENOM" id="CLU_022477_2_1_7"/>
<dbReference type="OrthoDB" id="9803846at2"/>
<dbReference type="UniPathway" id="UPA00193"/>
<dbReference type="UniPathway" id="UPA00288">
    <property type="reaction ID" value="UER01023"/>
</dbReference>
<dbReference type="Proteomes" id="UP000006695">
    <property type="component" value="Chromosome"/>
</dbReference>
<dbReference type="GO" id="GO:0005829">
    <property type="term" value="C:cytosol"/>
    <property type="evidence" value="ECO:0007669"/>
    <property type="project" value="TreeGrafter"/>
</dbReference>
<dbReference type="GO" id="GO:0004372">
    <property type="term" value="F:glycine hydroxymethyltransferase activity"/>
    <property type="evidence" value="ECO:0007669"/>
    <property type="project" value="UniProtKB-UniRule"/>
</dbReference>
<dbReference type="GO" id="GO:0030170">
    <property type="term" value="F:pyridoxal phosphate binding"/>
    <property type="evidence" value="ECO:0007669"/>
    <property type="project" value="UniProtKB-UniRule"/>
</dbReference>
<dbReference type="GO" id="GO:0019264">
    <property type="term" value="P:glycine biosynthetic process from serine"/>
    <property type="evidence" value="ECO:0007669"/>
    <property type="project" value="UniProtKB-UniRule"/>
</dbReference>
<dbReference type="GO" id="GO:0035999">
    <property type="term" value="P:tetrahydrofolate interconversion"/>
    <property type="evidence" value="ECO:0007669"/>
    <property type="project" value="UniProtKB-UniRule"/>
</dbReference>
<dbReference type="CDD" id="cd00378">
    <property type="entry name" value="SHMT"/>
    <property type="match status" value="1"/>
</dbReference>
<dbReference type="FunFam" id="3.40.640.10:FF:000001">
    <property type="entry name" value="Serine hydroxymethyltransferase"/>
    <property type="match status" value="1"/>
</dbReference>
<dbReference type="FunFam" id="3.90.1150.10:FF:000003">
    <property type="entry name" value="Serine hydroxymethyltransferase"/>
    <property type="match status" value="1"/>
</dbReference>
<dbReference type="Gene3D" id="3.90.1150.10">
    <property type="entry name" value="Aspartate Aminotransferase, domain 1"/>
    <property type="match status" value="1"/>
</dbReference>
<dbReference type="Gene3D" id="3.40.640.10">
    <property type="entry name" value="Type I PLP-dependent aspartate aminotransferase-like (Major domain)"/>
    <property type="match status" value="1"/>
</dbReference>
<dbReference type="HAMAP" id="MF_00051">
    <property type="entry name" value="SHMT"/>
    <property type="match status" value="1"/>
</dbReference>
<dbReference type="InterPro" id="IPR015424">
    <property type="entry name" value="PyrdxlP-dep_Trfase"/>
</dbReference>
<dbReference type="InterPro" id="IPR015421">
    <property type="entry name" value="PyrdxlP-dep_Trfase_major"/>
</dbReference>
<dbReference type="InterPro" id="IPR015422">
    <property type="entry name" value="PyrdxlP-dep_Trfase_small"/>
</dbReference>
<dbReference type="InterPro" id="IPR001085">
    <property type="entry name" value="Ser_HO-MeTrfase"/>
</dbReference>
<dbReference type="InterPro" id="IPR049943">
    <property type="entry name" value="Ser_HO-MeTrfase-like"/>
</dbReference>
<dbReference type="InterPro" id="IPR019798">
    <property type="entry name" value="Ser_HO-MeTrfase_PLP_BS"/>
</dbReference>
<dbReference type="InterPro" id="IPR039429">
    <property type="entry name" value="SHMT-like_dom"/>
</dbReference>
<dbReference type="NCBIfam" id="NF000586">
    <property type="entry name" value="PRK00011.1"/>
    <property type="match status" value="1"/>
</dbReference>
<dbReference type="PANTHER" id="PTHR11680">
    <property type="entry name" value="SERINE HYDROXYMETHYLTRANSFERASE"/>
    <property type="match status" value="1"/>
</dbReference>
<dbReference type="PANTHER" id="PTHR11680:SF50">
    <property type="entry name" value="SERINE HYDROXYMETHYLTRANSFERASE"/>
    <property type="match status" value="1"/>
</dbReference>
<dbReference type="Pfam" id="PF00464">
    <property type="entry name" value="SHMT"/>
    <property type="match status" value="1"/>
</dbReference>
<dbReference type="PIRSF" id="PIRSF000412">
    <property type="entry name" value="SHMT"/>
    <property type="match status" value="1"/>
</dbReference>
<dbReference type="SUPFAM" id="SSF53383">
    <property type="entry name" value="PLP-dependent transferases"/>
    <property type="match status" value="1"/>
</dbReference>
<dbReference type="PROSITE" id="PS00096">
    <property type="entry name" value="SHMT"/>
    <property type="match status" value="1"/>
</dbReference>
<evidence type="ECO:0000255" key="1">
    <source>
        <dbReference type="HAMAP-Rule" id="MF_00051"/>
    </source>
</evidence>